<protein>
    <recommendedName>
        <fullName evidence="1">Minor capsid protein L2</fullName>
    </recommendedName>
</protein>
<comment type="function">
    <text evidence="1">Minor protein of the capsid that localizes along the inner surface of the virion, within the central cavities beneath the L1 pentamers. Plays a role in capsid stabilization through interaction with the major capsid protein L1. Once the virion enters the host cell, L2 escorts the genomic DNA into the nucleus by promoting escape from the endosomal compartments and traffic through the host Golgi network. Mechanistically, the C-terminus of L2 possesses a cell-penetrating peptide that protudes from the host endosome, interacts with host cytoplasmic retromer cargo and thereby mediates the capsid delivery to the host trans-Golgi network. Plays a role through its interaction with host dynein in the intracellular microtubule-dependent transport of viral capsid toward the nucleus. Mediates the viral genome import into the nucleus through binding to host importins. Once within the nucleus, L2 localizes viral genomes to host PML bodies in order to activate early gene expression for establishment of infection. Later on, promotes late gene expression by interacting with the viral E2 protein and by inhibiting its transcriptional activation functions. During virion assembly, encapsidates the genome by direct interaction with the viral DNA.</text>
</comment>
<comment type="subunit">
    <text evidence="1">Interacts with major capsid protein L1. Interacts with E2; this interaction inhibits E2 transcriptional activity but not the DNA replication function E2. Interacts with host GADD45GIP1. Interacts with host HSPA8; this interaction is required for L2 nuclear translocation. Interacts with host importins KPNB2 and KPNB3. Forms a complex with importin alpha2-beta1 heterodimers via interaction with the importin alpha2 adapter. Interacts with host DYNLT1; this interaction is essential for virus intracellular transport during entry. Interacts (via C-terminus) with host retromer subunits VPS35 and VPS29.</text>
</comment>
<comment type="subcellular location">
    <subcellularLocation>
        <location evidence="1">Virion</location>
    </subcellularLocation>
    <subcellularLocation>
        <location evidence="1">Host nucleus</location>
    </subcellularLocation>
    <subcellularLocation>
        <location evidence="1">Host early endosome</location>
    </subcellularLocation>
    <subcellularLocation>
        <location evidence="1">Host Golgi apparatus</location>
    </subcellularLocation>
</comment>
<comment type="PTM">
    <text evidence="1">Highly phosphorylated.</text>
</comment>
<comment type="similarity">
    <text evidence="1">Belongs to the papillomaviridae L2 protein family.</text>
</comment>
<proteinExistence type="inferred from homology"/>
<evidence type="ECO:0000255" key="1">
    <source>
        <dbReference type="HAMAP-Rule" id="MF_04003"/>
    </source>
</evidence>
<sequence length="521" mass="57055">MVRARRTKRDSVTNIYRTCKQAGNCPPDVVNKVEQTTIADQILKFGSTGVFFGGLGIGTGRGTGGSTGYVPIGEGPAIRVGGTPSVVRPGILPEAIGPADIIPIDTVNPIDPNASSVVPLTDTGPDLLPGTIETIAEVNPAPDIPRVDTSVVTTSRGSSAVLEVASEPTPPTRTRISRTQYHNPSFQILTESTPSLGESALTDHVVVTSGSGGQPIGGVTPVEIELQELPSRYTFEIEEPTPPRRSSTPLRNITQAVGNLRRSLYNRRLTQQVNVQDPLFLQQPSRLVRFAFDNPVFEEEVTQIFERDVAAVEEPPDRDFLDIAKLSRPLYSETPQGYVRVSRLGNRASIRTRSGATVGAQVHFYTDLSTIDAEESIELSLLGEHSGDATIVQGPVESSFVDLNVQELPQVIEVDPEPTFHSDDLLLDEQNEDFSGSQLVYGSGRRSTTFTVPRFSTPRSDTFYVQDLEGYAVSYPERRNYPEIIYPQPDLPTVIIHTADTSGDFYLHPSLRRRKRKRTYL</sequence>
<name>VL2_HPV49</name>
<feature type="chain" id="PRO_0000133615" description="Minor capsid protein L2">
    <location>
        <begin position="1"/>
        <end position="521"/>
    </location>
</feature>
<feature type="short sequence motif" description="Nuclear localization signal" evidence="1">
    <location>
        <begin position="1"/>
        <end position="10"/>
    </location>
</feature>
<feature type="short sequence motif" description="Nuclear localization signal" evidence="1">
    <location>
        <begin position="513"/>
        <end position="520"/>
    </location>
</feature>
<feature type="disulfide bond" evidence="1">
    <location>
        <begin position="19"/>
        <end position="25"/>
    </location>
</feature>
<accession>P36762</accession>
<dbReference type="EMBL" id="X74480">
    <property type="protein sequence ID" value="CAA52583.1"/>
    <property type="molecule type" value="Genomic_DNA"/>
</dbReference>
<dbReference type="PIR" id="S36571">
    <property type="entry name" value="S36571"/>
</dbReference>
<dbReference type="RefSeq" id="NP_041836.1">
    <property type="nucleotide sequence ID" value="NC_001591.1"/>
</dbReference>
<dbReference type="ELM" id="P36762"/>
<dbReference type="GeneID" id="1489447"/>
<dbReference type="KEGG" id="vg:1489447"/>
<dbReference type="OrthoDB" id="8047at10239"/>
<dbReference type="Proteomes" id="UP000009124">
    <property type="component" value="Genome"/>
</dbReference>
<dbReference type="GO" id="GO:0043657">
    <property type="term" value="C:host cell"/>
    <property type="evidence" value="ECO:0007669"/>
    <property type="project" value="GOC"/>
</dbReference>
<dbReference type="GO" id="GO:0044174">
    <property type="term" value="C:host cell endosome"/>
    <property type="evidence" value="ECO:0007669"/>
    <property type="project" value="UniProtKB-KW"/>
</dbReference>
<dbReference type="GO" id="GO:0044177">
    <property type="term" value="C:host cell Golgi apparatus"/>
    <property type="evidence" value="ECO:0007669"/>
    <property type="project" value="UniProtKB-SubCell"/>
</dbReference>
<dbReference type="GO" id="GO:0042025">
    <property type="term" value="C:host cell nucleus"/>
    <property type="evidence" value="ECO:0007669"/>
    <property type="project" value="UniProtKB-SubCell"/>
</dbReference>
<dbReference type="GO" id="GO:0019028">
    <property type="term" value="C:viral capsid"/>
    <property type="evidence" value="ECO:0007669"/>
    <property type="project" value="UniProtKB-UniRule"/>
</dbReference>
<dbReference type="GO" id="GO:0003677">
    <property type="term" value="F:DNA binding"/>
    <property type="evidence" value="ECO:0007669"/>
    <property type="project" value="UniProtKB-UniRule"/>
</dbReference>
<dbReference type="GO" id="GO:0005198">
    <property type="term" value="F:structural molecule activity"/>
    <property type="evidence" value="ECO:0007669"/>
    <property type="project" value="UniProtKB-UniRule"/>
</dbReference>
<dbReference type="GO" id="GO:0075521">
    <property type="term" value="P:microtubule-dependent intracellular transport of viral material towards nucleus"/>
    <property type="evidence" value="ECO:0007669"/>
    <property type="project" value="UniProtKB-UniRule"/>
</dbReference>
<dbReference type="GO" id="GO:0046718">
    <property type="term" value="P:symbiont entry into host cell"/>
    <property type="evidence" value="ECO:0007669"/>
    <property type="project" value="UniProtKB-KW"/>
</dbReference>
<dbReference type="GO" id="GO:0075732">
    <property type="term" value="P:viral penetration into host nucleus"/>
    <property type="evidence" value="ECO:0007669"/>
    <property type="project" value="UniProtKB-KW"/>
</dbReference>
<dbReference type="HAMAP" id="MF_04003">
    <property type="entry name" value="PPV_L2"/>
    <property type="match status" value="1"/>
</dbReference>
<dbReference type="InterPro" id="IPR000784">
    <property type="entry name" value="Late_L2"/>
</dbReference>
<dbReference type="Pfam" id="PF00513">
    <property type="entry name" value="Late_protein_L2"/>
    <property type="match status" value="1"/>
</dbReference>
<gene>
    <name evidence="1" type="primary">L2</name>
</gene>
<reference key="1">
    <citation type="journal article" date="1994" name="Curr. Top. Microbiol. Immunol.">
        <title>Primer-directed sequencing of human papillomavirus types.</title>
        <authorList>
            <person name="Delius H."/>
            <person name="Hofmann B."/>
        </authorList>
    </citation>
    <scope>NUCLEOTIDE SEQUENCE [GENOMIC DNA]</scope>
</reference>
<keyword id="KW-0167">Capsid protein</keyword>
<keyword id="KW-1176">Cytoplasmic inwards viral transport</keyword>
<keyword id="KW-1015">Disulfide bond</keyword>
<keyword id="KW-0238">DNA-binding</keyword>
<keyword id="KW-1039">Host endosome</keyword>
<keyword id="KW-1040">Host Golgi apparatus</keyword>
<keyword id="KW-1048">Host nucleus</keyword>
<keyword id="KW-0945">Host-virus interaction</keyword>
<keyword id="KW-0426">Late protein</keyword>
<keyword id="KW-1177">Microtubular inwards viral transport</keyword>
<keyword id="KW-0597">Phosphoprotein</keyword>
<keyword id="KW-1163">Viral penetration into host nucleus</keyword>
<keyword id="KW-0946">Virion</keyword>
<keyword id="KW-1160">Virus entry into host cell</keyword>
<organism>
    <name type="scientific">Human papillomavirus type 49</name>
    <dbReference type="NCBI Taxonomy" id="10616"/>
    <lineage>
        <taxon>Viruses</taxon>
        <taxon>Monodnaviria</taxon>
        <taxon>Shotokuvirae</taxon>
        <taxon>Cossaviricota</taxon>
        <taxon>Papovaviricetes</taxon>
        <taxon>Zurhausenvirales</taxon>
        <taxon>Papillomaviridae</taxon>
        <taxon>Firstpapillomavirinae</taxon>
        <taxon>Betapapillomavirus</taxon>
        <taxon>Betapapillomavirus 3</taxon>
    </lineage>
</organism>
<organismHost>
    <name type="scientific">Homo sapiens</name>
    <name type="common">Human</name>
    <dbReference type="NCBI Taxonomy" id="9606"/>
</organismHost>